<organism>
    <name type="scientific">Xanthomonas euvesicatoria pv. vesicatoria (strain 85-10)</name>
    <name type="common">Xanthomonas campestris pv. vesicatoria</name>
    <dbReference type="NCBI Taxonomy" id="316273"/>
    <lineage>
        <taxon>Bacteria</taxon>
        <taxon>Pseudomonadati</taxon>
        <taxon>Pseudomonadota</taxon>
        <taxon>Gammaproteobacteria</taxon>
        <taxon>Lysobacterales</taxon>
        <taxon>Lysobacteraceae</taxon>
        <taxon>Xanthomonas</taxon>
    </lineage>
</organism>
<gene>
    <name evidence="1" type="primary">rnhA</name>
    <name type="ordered locus">XCV1089</name>
</gene>
<proteinExistence type="inferred from homology"/>
<evidence type="ECO:0000255" key="1">
    <source>
        <dbReference type="HAMAP-Rule" id="MF_00042"/>
    </source>
</evidence>
<evidence type="ECO:0000255" key="2">
    <source>
        <dbReference type="PROSITE-ProRule" id="PRU00408"/>
    </source>
</evidence>
<protein>
    <recommendedName>
        <fullName evidence="1">Ribonuclease H</fullName>
        <shortName evidence="1">RNase H</shortName>
        <ecNumber evidence="1">3.1.26.4</ecNumber>
    </recommendedName>
</protein>
<name>RNH_XANE5</name>
<accession>Q3BWP3</accession>
<reference key="1">
    <citation type="journal article" date="2005" name="J. Bacteriol.">
        <title>Insights into genome plasticity and pathogenicity of the plant pathogenic Bacterium Xanthomonas campestris pv. vesicatoria revealed by the complete genome sequence.</title>
        <authorList>
            <person name="Thieme F."/>
            <person name="Koebnik R."/>
            <person name="Bekel T."/>
            <person name="Berger C."/>
            <person name="Boch J."/>
            <person name="Buettner D."/>
            <person name="Caldana C."/>
            <person name="Gaigalat L."/>
            <person name="Goesmann A."/>
            <person name="Kay S."/>
            <person name="Kirchner O."/>
            <person name="Lanz C."/>
            <person name="Linke B."/>
            <person name="McHardy A.C."/>
            <person name="Meyer F."/>
            <person name="Mittenhuber G."/>
            <person name="Nies D.H."/>
            <person name="Niesbach-Kloesgen U."/>
            <person name="Patschkowski T."/>
            <person name="Rueckert C."/>
            <person name="Rupp O."/>
            <person name="Schneiker S."/>
            <person name="Schuster S.C."/>
            <person name="Vorhoelter F.J."/>
            <person name="Weber E."/>
            <person name="Puehler A."/>
            <person name="Bonas U."/>
            <person name="Bartels D."/>
            <person name="Kaiser O."/>
        </authorList>
    </citation>
    <scope>NUCLEOTIDE SEQUENCE [LARGE SCALE GENOMIC DNA]</scope>
    <source>
        <strain>85-10</strain>
    </source>
</reference>
<keyword id="KW-0963">Cytoplasm</keyword>
<keyword id="KW-0255">Endonuclease</keyword>
<keyword id="KW-0378">Hydrolase</keyword>
<keyword id="KW-0460">Magnesium</keyword>
<keyword id="KW-0479">Metal-binding</keyword>
<keyword id="KW-0540">Nuclease</keyword>
<comment type="function">
    <text evidence="1">Endonuclease that specifically degrades the RNA of RNA-DNA hybrids.</text>
</comment>
<comment type="catalytic activity">
    <reaction evidence="1">
        <text>Endonucleolytic cleavage to 5'-phosphomonoester.</text>
        <dbReference type="EC" id="3.1.26.4"/>
    </reaction>
</comment>
<comment type="cofactor">
    <cofactor evidence="1">
        <name>Mg(2+)</name>
        <dbReference type="ChEBI" id="CHEBI:18420"/>
    </cofactor>
    <text evidence="1">Binds 1 Mg(2+) ion per subunit. May bind a second metal ion at a regulatory site, or after substrate binding.</text>
</comment>
<comment type="subunit">
    <text evidence="1">Monomer.</text>
</comment>
<comment type="subcellular location">
    <subcellularLocation>
        <location evidence="1">Cytoplasm</location>
    </subcellularLocation>
</comment>
<comment type="similarity">
    <text evidence="1">Belongs to the RNase H family.</text>
</comment>
<feature type="chain" id="PRO_0000332690" description="Ribonuclease H">
    <location>
        <begin position="1"/>
        <end position="150"/>
    </location>
</feature>
<feature type="domain" description="RNase H type-1" evidence="2">
    <location>
        <begin position="1"/>
        <end position="141"/>
    </location>
</feature>
<feature type="binding site" evidence="1">
    <location>
        <position position="9"/>
    </location>
    <ligand>
        <name>Mg(2+)</name>
        <dbReference type="ChEBI" id="CHEBI:18420"/>
        <label>1</label>
    </ligand>
</feature>
<feature type="binding site" evidence="1">
    <location>
        <position position="9"/>
    </location>
    <ligand>
        <name>Mg(2+)</name>
        <dbReference type="ChEBI" id="CHEBI:18420"/>
        <label>2</label>
    </ligand>
</feature>
<feature type="binding site" evidence="1">
    <location>
        <position position="47"/>
    </location>
    <ligand>
        <name>Mg(2+)</name>
        <dbReference type="ChEBI" id="CHEBI:18420"/>
        <label>1</label>
    </ligand>
</feature>
<feature type="binding site" evidence="1">
    <location>
        <position position="69"/>
    </location>
    <ligand>
        <name>Mg(2+)</name>
        <dbReference type="ChEBI" id="CHEBI:18420"/>
        <label>1</label>
    </ligand>
</feature>
<feature type="binding site" evidence="1">
    <location>
        <position position="133"/>
    </location>
    <ligand>
        <name>Mg(2+)</name>
        <dbReference type="ChEBI" id="CHEBI:18420"/>
        <label>2</label>
    </ligand>
</feature>
<dbReference type="EC" id="3.1.26.4" evidence="1"/>
<dbReference type="EMBL" id="AM039952">
    <property type="protein sequence ID" value="CAJ22720.1"/>
    <property type="molecule type" value="Genomic_DNA"/>
</dbReference>
<dbReference type="RefSeq" id="WP_011346591.1">
    <property type="nucleotide sequence ID" value="NZ_CP017190.1"/>
</dbReference>
<dbReference type="SMR" id="Q3BWP3"/>
<dbReference type="STRING" id="456327.BJD11_17245"/>
<dbReference type="KEGG" id="xcv:XCV1089"/>
<dbReference type="eggNOG" id="COG0328">
    <property type="taxonomic scope" value="Bacteria"/>
</dbReference>
<dbReference type="HOGENOM" id="CLU_030894_6_0_6"/>
<dbReference type="Proteomes" id="UP000007069">
    <property type="component" value="Chromosome"/>
</dbReference>
<dbReference type="GO" id="GO:0005737">
    <property type="term" value="C:cytoplasm"/>
    <property type="evidence" value="ECO:0007669"/>
    <property type="project" value="UniProtKB-SubCell"/>
</dbReference>
<dbReference type="GO" id="GO:0000287">
    <property type="term" value="F:magnesium ion binding"/>
    <property type="evidence" value="ECO:0007669"/>
    <property type="project" value="UniProtKB-UniRule"/>
</dbReference>
<dbReference type="GO" id="GO:0003676">
    <property type="term" value="F:nucleic acid binding"/>
    <property type="evidence" value="ECO:0007669"/>
    <property type="project" value="InterPro"/>
</dbReference>
<dbReference type="GO" id="GO:0004523">
    <property type="term" value="F:RNA-DNA hybrid ribonuclease activity"/>
    <property type="evidence" value="ECO:0007669"/>
    <property type="project" value="UniProtKB-UniRule"/>
</dbReference>
<dbReference type="GO" id="GO:0043137">
    <property type="term" value="P:DNA replication, removal of RNA primer"/>
    <property type="evidence" value="ECO:0007669"/>
    <property type="project" value="TreeGrafter"/>
</dbReference>
<dbReference type="CDD" id="cd09278">
    <property type="entry name" value="RNase_HI_prokaryote_like"/>
    <property type="match status" value="1"/>
</dbReference>
<dbReference type="FunFam" id="3.30.420.10:FF:000008">
    <property type="entry name" value="Ribonuclease H"/>
    <property type="match status" value="1"/>
</dbReference>
<dbReference type="Gene3D" id="3.30.420.10">
    <property type="entry name" value="Ribonuclease H-like superfamily/Ribonuclease H"/>
    <property type="match status" value="1"/>
</dbReference>
<dbReference type="HAMAP" id="MF_00042">
    <property type="entry name" value="RNase_H"/>
    <property type="match status" value="1"/>
</dbReference>
<dbReference type="InterPro" id="IPR050092">
    <property type="entry name" value="RNase_H"/>
</dbReference>
<dbReference type="InterPro" id="IPR012337">
    <property type="entry name" value="RNaseH-like_sf"/>
</dbReference>
<dbReference type="InterPro" id="IPR002156">
    <property type="entry name" value="RNaseH_domain"/>
</dbReference>
<dbReference type="InterPro" id="IPR036397">
    <property type="entry name" value="RNaseH_sf"/>
</dbReference>
<dbReference type="InterPro" id="IPR022892">
    <property type="entry name" value="RNaseHI"/>
</dbReference>
<dbReference type="NCBIfam" id="NF001236">
    <property type="entry name" value="PRK00203.1"/>
    <property type="match status" value="1"/>
</dbReference>
<dbReference type="PANTHER" id="PTHR10642">
    <property type="entry name" value="RIBONUCLEASE H1"/>
    <property type="match status" value="1"/>
</dbReference>
<dbReference type="PANTHER" id="PTHR10642:SF26">
    <property type="entry name" value="RIBONUCLEASE H1"/>
    <property type="match status" value="1"/>
</dbReference>
<dbReference type="Pfam" id="PF00075">
    <property type="entry name" value="RNase_H"/>
    <property type="match status" value="1"/>
</dbReference>
<dbReference type="SUPFAM" id="SSF53098">
    <property type="entry name" value="Ribonuclease H-like"/>
    <property type="match status" value="1"/>
</dbReference>
<dbReference type="PROSITE" id="PS50879">
    <property type="entry name" value="RNASE_H_1"/>
    <property type="match status" value="1"/>
</dbReference>
<sequence length="150" mass="16928">MKFIEVHTDGSCLGNPGPGGWAALLRYNGREKELAGGEAVSTNNRMELMAAIMALETLTEPCQIVLHTDSQYVRQGITEWMPGWVRRNWKTAGGDPVKNRELWERLHAATQRHRIDWRWVKGHNGDPDNERVDVLARNQAIAQRDGLATS</sequence>